<feature type="chain" id="PRO_1000008215" description="Translation initiation factor IF-2">
    <location>
        <begin position="1"/>
        <end position="975"/>
    </location>
</feature>
<feature type="domain" description="tr-type G">
    <location>
        <begin position="475"/>
        <end position="644"/>
    </location>
</feature>
<feature type="region of interest" description="Disordered" evidence="3">
    <location>
        <begin position="48"/>
        <end position="84"/>
    </location>
</feature>
<feature type="region of interest" description="Disordered" evidence="3">
    <location>
        <begin position="96"/>
        <end position="388"/>
    </location>
</feature>
<feature type="region of interest" description="G1" evidence="1">
    <location>
        <begin position="484"/>
        <end position="491"/>
    </location>
</feature>
<feature type="region of interest" description="G2" evidence="1">
    <location>
        <begin position="509"/>
        <end position="513"/>
    </location>
</feature>
<feature type="region of interest" description="G3" evidence="1">
    <location>
        <begin position="530"/>
        <end position="533"/>
    </location>
</feature>
<feature type="region of interest" description="G4" evidence="1">
    <location>
        <begin position="584"/>
        <end position="587"/>
    </location>
</feature>
<feature type="region of interest" description="G5" evidence="1">
    <location>
        <begin position="620"/>
        <end position="622"/>
    </location>
</feature>
<feature type="compositionally biased region" description="Basic and acidic residues" evidence="3">
    <location>
        <begin position="48"/>
        <end position="63"/>
    </location>
</feature>
<feature type="compositionally biased region" description="Low complexity" evidence="3">
    <location>
        <begin position="104"/>
        <end position="115"/>
    </location>
</feature>
<feature type="compositionally biased region" description="Basic and acidic residues" evidence="3">
    <location>
        <begin position="120"/>
        <end position="177"/>
    </location>
</feature>
<feature type="compositionally biased region" description="Low complexity" evidence="3">
    <location>
        <begin position="178"/>
        <end position="211"/>
    </location>
</feature>
<feature type="compositionally biased region" description="Basic and acidic residues" evidence="3">
    <location>
        <begin position="212"/>
        <end position="263"/>
    </location>
</feature>
<feature type="compositionally biased region" description="Low complexity" evidence="3">
    <location>
        <begin position="302"/>
        <end position="330"/>
    </location>
</feature>
<feature type="compositionally biased region" description="Gly residues" evidence="3">
    <location>
        <begin position="359"/>
        <end position="372"/>
    </location>
</feature>
<feature type="binding site" evidence="2">
    <location>
        <begin position="484"/>
        <end position="491"/>
    </location>
    <ligand>
        <name>GTP</name>
        <dbReference type="ChEBI" id="CHEBI:37565"/>
    </ligand>
</feature>
<feature type="binding site" evidence="2">
    <location>
        <begin position="530"/>
        <end position="534"/>
    </location>
    <ligand>
        <name>GTP</name>
        <dbReference type="ChEBI" id="CHEBI:37565"/>
    </ligand>
</feature>
<feature type="binding site" evidence="2">
    <location>
        <begin position="584"/>
        <end position="587"/>
    </location>
    <ligand>
        <name>GTP</name>
        <dbReference type="ChEBI" id="CHEBI:37565"/>
    </ligand>
</feature>
<sequence length="975" mass="104765">MASNNVAQFAAELKMPAGVLLEQLQAAGVQKASEDDALSETDKARLLDHLRKSHGATDGDKRKITLTRRHTSEIKQADATGKARTIQVEVRKKRTFVKRDDVSETGADQAQAQTDEQAEAELKRREEEARREAELLEKQAQELRERQERLEREEAERRAREEAAEAERRRAEEEAAAKRAAAAQAEAAQQAAAAREQAQRAQSEPAEQSAQDEARAAAERAAQREAAKKAEDAAREAADKARAEQEEIRKRREAAEAEARAIREMMNTPRRAQVKAVEPPKPAEPPAAKAAEAKGTLHKPAKPAGEAAAARPAAKKPASGAPAPAAAPAGDRTKKPGTGKSGWQDDAAKRRGIKTRGDSSGGVDRGWRGGPKGRGKHQDSASSFQAPTEPIVREVHVPETISVADLAHKMSIKASEVIKVMMKMGQMVTINQVLDQETAMIVVEELGHRALAAKLDDPEALLVEGEIGSDAEQLPRPPVVTVMGHVDHGKTSLLDYIRRAKVAAGEAGGITQHIGAYHVETPRGVVTFLDTPGHEAFTAMRARGAKATDIVILVVAADDGVMPQTKEAISHAKAGGVPIVVAINKIDKPEANPDRVKQELVAEGVVPEEYGGDSPFVPVSAKTGAGIDDLLENVLLQAEVLELKAPVESPAKGIVIEAKLDKGKGPVATVLVQSGTLSRGDVVLAGTAYGRVRAMLDENGKPTKEAGPSIPVEIQGLSEVPGAGEEVIVLPDERKAREIALFRQGKFRDVKLAKQQAAKLESMLEQMGEGEVQNLPLIIKADVQGSQEALVQSLLKLSTDEVRVQIVHSAVGGISESDVNLATASKAVIIGFNTRADAQARKLAEANGIDIRYYNIIYDAVDEVKAAMSGMLAPEKREVVTGMVEVRQVFKVPKVGTVAGCMVTDGVVKRSSSVRVLRNNVVIFTGELDSLKRFKDDVKEVKQGFECGMSLKNFNDIVEGDQFEVFEVTEVARTL</sequence>
<name>IF2_BURP6</name>
<proteinExistence type="inferred from homology"/>
<organism>
    <name type="scientific">Burkholderia pseudomallei (strain 668)</name>
    <dbReference type="NCBI Taxonomy" id="320373"/>
    <lineage>
        <taxon>Bacteria</taxon>
        <taxon>Pseudomonadati</taxon>
        <taxon>Pseudomonadota</taxon>
        <taxon>Betaproteobacteria</taxon>
        <taxon>Burkholderiales</taxon>
        <taxon>Burkholderiaceae</taxon>
        <taxon>Burkholderia</taxon>
        <taxon>pseudomallei group</taxon>
    </lineage>
</organism>
<keyword id="KW-0963">Cytoplasm</keyword>
<keyword id="KW-0342">GTP-binding</keyword>
<keyword id="KW-0396">Initiation factor</keyword>
<keyword id="KW-0547">Nucleotide-binding</keyword>
<keyword id="KW-0648">Protein biosynthesis</keyword>
<protein>
    <recommendedName>
        <fullName evidence="2">Translation initiation factor IF-2</fullName>
    </recommendedName>
</protein>
<evidence type="ECO:0000250" key="1"/>
<evidence type="ECO:0000255" key="2">
    <source>
        <dbReference type="HAMAP-Rule" id="MF_00100"/>
    </source>
</evidence>
<evidence type="ECO:0000256" key="3">
    <source>
        <dbReference type="SAM" id="MobiDB-lite"/>
    </source>
</evidence>
<reference key="1">
    <citation type="journal article" date="2010" name="Genome Biol. Evol.">
        <title>Continuing evolution of Burkholderia mallei through genome reduction and large-scale rearrangements.</title>
        <authorList>
            <person name="Losada L."/>
            <person name="Ronning C.M."/>
            <person name="DeShazer D."/>
            <person name="Woods D."/>
            <person name="Fedorova N."/>
            <person name="Kim H.S."/>
            <person name="Shabalina S.A."/>
            <person name="Pearson T.R."/>
            <person name="Brinkac L."/>
            <person name="Tan P."/>
            <person name="Nandi T."/>
            <person name="Crabtree J."/>
            <person name="Badger J."/>
            <person name="Beckstrom-Sternberg S."/>
            <person name="Saqib M."/>
            <person name="Schutzer S.E."/>
            <person name="Keim P."/>
            <person name="Nierman W.C."/>
        </authorList>
    </citation>
    <scope>NUCLEOTIDE SEQUENCE [LARGE SCALE GENOMIC DNA]</scope>
    <source>
        <strain>668</strain>
    </source>
</reference>
<comment type="function">
    <text evidence="2">One of the essential components for the initiation of protein synthesis. Protects formylmethionyl-tRNA from spontaneous hydrolysis and promotes its binding to the 30S ribosomal subunits. Also involved in the hydrolysis of GTP during the formation of the 70S ribosomal complex.</text>
</comment>
<comment type="subcellular location">
    <subcellularLocation>
        <location evidence="2">Cytoplasm</location>
    </subcellularLocation>
</comment>
<comment type="similarity">
    <text evidence="2">Belongs to the TRAFAC class translation factor GTPase superfamily. Classic translation factor GTPase family. IF-2 subfamily.</text>
</comment>
<accession>A3N8V8</accession>
<gene>
    <name evidence="2" type="primary">infB</name>
    <name type="ordered locus">BURPS668_1740</name>
</gene>
<dbReference type="EMBL" id="CP000570">
    <property type="protein sequence ID" value="ABN83595.1"/>
    <property type="molecule type" value="Genomic_DNA"/>
</dbReference>
<dbReference type="RefSeq" id="WP_004526850.1">
    <property type="nucleotide sequence ID" value="NC_009074.1"/>
</dbReference>
<dbReference type="SMR" id="A3N8V8"/>
<dbReference type="KEGG" id="bpd:BURPS668_1740"/>
<dbReference type="HOGENOM" id="CLU_006301_6_0_4"/>
<dbReference type="GO" id="GO:0005829">
    <property type="term" value="C:cytosol"/>
    <property type="evidence" value="ECO:0007669"/>
    <property type="project" value="TreeGrafter"/>
</dbReference>
<dbReference type="GO" id="GO:0005525">
    <property type="term" value="F:GTP binding"/>
    <property type="evidence" value="ECO:0007669"/>
    <property type="project" value="UniProtKB-KW"/>
</dbReference>
<dbReference type="GO" id="GO:0003924">
    <property type="term" value="F:GTPase activity"/>
    <property type="evidence" value="ECO:0007669"/>
    <property type="project" value="UniProtKB-UniRule"/>
</dbReference>
<dbReference type="GO" id="GO:0097216">
    <property type="term" value="F:guanosine tetraphosphate binding"/>
    <property type="evidence" value="ECO:0007669"/>
    <property type="project" value="UniProtKB-ARBA"/>
</dbReference>
<dbReference type="GO" id="GO:0003743">
    <property type="term" value="F:translation initiation factor activity"/>
    <property type="evidence" value="ECO:0007669"/>
    <property type="project" value="UniProtKB-UniRule"/>
</dbReference>
<dbReference type="CDD" id="cd01887">
    <property type="entry name" value="IF2_eIF5B"/>
    <property type="match status" value="1"/>
</dbReference>
<dbReference type="CDD" id="cd03702">
    <property type="entry name" value="IF2_mtIF2_II"/>
    <property type="match status" value="1"/>
</dbReference>
<dbReference type="CDD" id="cd03692">
    <property type="entry name" value="mtIF2_IVc"/>
    <property type="match status" value="1"/>
</dbReference>
<dbReference type="FunFam" id="2.40.30.10:FF:000007">
    <property type="entry name" value="Translation initiation factor IF-2"/>
    <property type="match status" value="1"/>
</dbReference>
<dbReference type="FunFam" id="2.40.30.10:FF:000008">
    <property type="entry name" value="Translation initiation factor IF-2"/>
    <property type="match status" value="1"/>
</dbReference>
<dbReference type="FunFam" id="3.40.50.10050:FF:000001">
    <property type="entry name" value="Translation initiation factor IF-2"/>
    <property type="match status" value="1"/>
</dbReference>
<dbReference type="FunFam" id="3.40.50.300:FF:000019">
    <property type="entry name" value="Translation initiation factor IF-2"/>
    <property type="match status" value="1"/>
</dbReference>
<dbReference type="Gene3D" id="3.40.50.300">
    <property type="entry name" value="P-loop containing nucleotide triphosphate hydrolases"/>
    <property type="match status" value="1"/>
</dbReference>
<dbReference type="Gene3D" id="3.30.56.50">
    <property type="entry name" value="Putative DNA-binding domain, N-terminal subdomain of bacterial translation initiation factor IF2"/>
    <property type="match status" value="1"/>
</dbReference>
<dbReference type="Gene3D" id="2.40.30.10">
    <property type="entry name" value="Translation factors"/>
    <property type="match status" value="2"/>
</dbReference>
<dbReference type="Gene3D" id="3.40.50.10050">
    <property type="entry name" value="Translation initiation factor IF- 2, domain 3"/>
    <property type="match status" value="1"/>
</dbReference>
<dbReference type="HAMAP" id="MF_00100_B">
    <property type="entry name" value="IF_2_B"/>
    <property type="match status" value="1"/>
</dbReference>
<dbReference type="InterPro" id="IPR009061">
    <property type="entry name" value="DNA-bd_dom_put_sf"/>
</dbReference>
<dbReference type="InterPro" id="IPR053905">
    <property type="entry name" value="EF-G-like_DII"/>
</dbReference>
<dbReference type="InterPro" id="IPR004161">
    <property type="entry name" value="EFTu-like_2"/>
</dbReference>
<dbReference type="InterPro" id="IPR013575">
    <property type="entry name" value="IF2_assoc_dom_bac"/>
</dbReference>
<dbReference type="InterPro" id="IPR044145">
    <property type="entry name" value="IF2_II"/>
</dbReference>
<dbReference type="InterPro" id="IPR006847">
    <property type="entry name" value="IF2_N"/>
</dbReference>
<dbReference type="InterPro" id="IPR027417">
    <property type="entry name" value="P-loop_NTPase"/>
</dbReference>
<dbReference type="InterPro" id="IPR005225">
    <property type="entry name" value="Small_GTP-bd"/>
</dbReference>
<dbReference type="InterPro" id="IPR000795">
    <property type="entry name" value="T_Tr_GTP-bd_dom"/>
</dbReference>
<dbReference type="InterPro" id="IPR000178">
    <property type="entry name" value="TF_IF2_bacterial-like"/>
</dbReference>
<dbReference type="InterPro" id="IPR015760">
    <property type="entry name" value="TIF_IF2"/>
</dbReference>
<dbReference type="InterPro" id="IPR023115">
    <property type="entry name" value="TIF_IF2_dom3"/>
</dbReference>
<dbReference type="InterPro" id="IPR036925">
    <property type="entry name" value="TIF_IF2_dom3_sf"/>
</dbReference>
<dbReference type="InterPro" id="IPR009000">
    <property type="entry name" value="Transl_B-barrel_sf"/>
</dbReference>
<dbReference type="NCBIfam" id="TIGR00487">
    <property type="entry name" value="IF-2"/>
    <property type="match status" value="1"/>
</dbReference>
<dbReference type="NCBIfam" id="TIGR00231">
    <property type="entry name" value="small_GTP"/>
    <property type="match status" value="1"/>
</dbReference>
<dbReference type="PANTHER" id="PTHR43381:SF5">
    <property type="entry name" value="TR-TYPE G DOMAIN-CONTAINING PROTEIN"/>
    <property type="match status" value="1"/>
</dbReference>
<dbReference type="PANTHER" id="PTHR43381">
    <property type="entry name" value="TRANSLATION INITIATION FACTOR IF-2-RELATED"/>
    <property type="match status" value="1"/>
</dbReference>
<dbReference type="Pfam" id="PF22042">
    <property type="entry name" value="EF-G_D2"/>
    <property type="match status" value="1"/>
</dbReference>
<dbReference type="Pfam" id="PF00009">
    <property type="entry name" value="GTP_EFTU"/>
    <property type="match status" value="1"/>
</dbReference>
<dbReference type="Pfam" id="PF03144">
    <property type="entry name" value="GTP_EFTU_D2"/>
    <property type="match status" value="1"/>
</dbReference>
<dbReference type="Pfam" id="PF11987">
    <property type="entry name" value="IF-2"/>
    <property type="match status" value="1"/>
</dbReference>
<dbReference type="Pfam" id="PF08364">
    <property type="entry name" value="IF2_assoc"/>
    <property type="match status" value="1"/>
</dbReference>
<dbReference type="Pfam" id="PF04760">
    <property type="entry name" value="IF2_N"/>
    <property type="match status" value="2"/>
</dbReference>
<dbReference type="SUPFAM" id="SSF52156">
    <property type="entry name" value="Initiation factor IF2/eIF5b, domain 3"/>
    <property type="match status" value="1"/>
</dbReference>
<dbReference type="SUPFAM" id="SSF52540">
    <property type="entry name" value="P-loop containing nucleoside triphosphate hydrolases"/>
    <property type="match status" value="1"/>
</dbReference>
<dbReference type="SUPFAM" id="SSF46955">
    <property type="entry name" value="Putative DNA-binding domain"/>
    <property type="match status" value="1"/>
</dbReference>
<dbReference type="SUPFAM" id="SSF50447">
    <property type="entry name" value="Translation proteins"/>
    <property type="match status" value="2"/>
</dbReference>
<dbReference type="PROSITE" id="PS51722">
    <property type="entry name" value="G_TR_2"/>
    <property type="match status" value="1"/>
</dbReference>
<dbReference type="PROSITE" id="PS01176">
    <property type="entry name" value="IF2"/>
    <property type="match status" value="1"/>
</dbReference>